<protein>
    <recommendedName>
        <fullName evidence="1">Large ribosomal subunit protein uL30</fullName>
    </recommendedName>
    <alternativeName>
        <fullName evidence="2">50S ribosomal protein L30</fullName>
    </alternativeName>
</protein>
<dbReference type="EMBL" id="CP000678">
    <property type="protein sequence ID" value="ABQ86945.1"/>
    <property type="molecule type" value="Genomic_DNA"/>
</dbReference>
<dbReference type="RefSeq" id="WP_004033237.1">
    <property type="nucleotide sequence ID" value="NZ_CP117965.1"/>
</dbReference>
<dbReference type="SMR" id="A5UL67"/>
<dbReference type="STRING" id="420247.Msm_0740"/>
<dbReference type="EnsemblBacteria" id="ABQ86945">
    <property type="protein sequence ID" value="ABQ86945"/>
    <property type="gene ID" value="Msm_0740"/>
</dbReference>
<dbReference type="KEGG" id="msi:Msm_0740"/>
<dbReference type="PATRIC" id="fig|420247.28.peg.737"/>
<dbReference type="eggNOG" id="arCOG04086">
    <property type="taxonomic scope" value="Archaea"/>
</dbReference>
<dbReference type="HOGENOM" id="CLU_055156_6_0_2"/>
<dbReference type="Proteomes" id="UP000001992">
    <property type="component" value="Chromosome"/>
</dbReference>
<dbReference type="GO" id="GO:0022625">
    <property type="term" value="C:cytosolic large ribosomal subunit"/>
    <property type="evidence" value="ECO:0007669"/>
    <property type="project" value="TreeGrafter"/>
</dbReference>
<dbReference type="GO" id="GO:0003723">
    <property type="term" value="F:RNA binding"/>
    <property type="evidence" value="ECO:0007669"/>
    <property type="project" value="TreeGrafter"/>
</dbReference>
<dbReference type="GO" id="GO:0003735">
    <property type="term" value="F:structural constituent of ribosome"/>
    <property type="evidence" value="ECO:0007669"/>
    <property type="project" value="InterPro"/>
</dbReference>
<dbReference type="GO" id="GO:0000463">
    <property type="term" value="P:maturation of LSU-rRNA from tricistronic rRNA transcript (SSU-rRNA, 5.8S rRNA, LSU-rRNA)"/>
    <property type="evidence" value="ECO:0007669"/>
    <property type="project" value="TreeGrafter"/>
</dbReference>
<dbReference type="GO" id="GO:0006412">
    <property type="term" value="P:translation"/>
    <property type="evidence" value="ECO:0007669"/>
    <property type="project" value="UniProtKB-UniRule"/>
</dbReference>
<dbReference type="CDD" id="cd01657">
    <property type="entry name" value="Ribosomal_L7_archeal_euk"/>
    <property type="match status" value="1"/>
</dbReference>
<dbReference type="Gene3D" id="1.10.15.30">
    <property type="match status" value="1"/>
</dbReference>
<dbReference type="Gene3D" id="3.30.1390.20">
    <property type="entry name" value="Ribosomal protein L30, ferredoxin-like fold domain"/>
    <property type="match status" value="1"/>
</dbReference>
<dbReference type="HAMAP" id="MF_01371_A">
    <property type="entry name" value="Ribosomal_uL30_A"/>
    <property type="match status" value="1"/>
</dbReference>
<dbReference type="InterPro" id="IPR036919">
    <property type="entry name" value="Ribo_uL30_ferredoxin-like_sf"/>
</dbReference>
<dbReference type="InterPro" id="IPR039699">
    <property type="entry name" value="Ribosomal_uL30"/>
</dbReference>
<dbReference type="InterPro" id="IPR005997">
    <property type="entry name" value="Ribosomal_uL30_arc"/>
</dbReference>
<dbReference type="InterPro" id="IPR018038">
    <property type="entry name" value="Ribosomal_uL30_CS"/>
</dbReference>
<dbReference type="InterPro" id="IPR035808">
    <property type="entry name" value="Ribosomal_uL30_euk_arc"/>
</dbReference>
<dbReference type="InterPro" id="IPR016082">
    <property type="entry name" value="Ribosomal_uL30_ferredoxin-like"/>
</dbReference>
<dbReference type="NCBIfam" id="NF004711">
    <property type="entry name" value="PRK06049.1"/>
    <property type="match status" value="1"/>
</dbReference>
<dbReference type="NCBIfam" id="TIGR01309">
    <property type="entry name" value="uL30_arch"/>
    <property type="match status" value="1"/>
</dbReference>
<dbReference type="PANTHER" id="PTHR11524">
    <property type="entry name" value="60S RIBOSOMAL PROTEIN L7"/>
    <property type="match status" value="1"/>
</dbReference>
<dbReference type="PANTHER" id="PTHR11524:SF16">
    <property type="entry name" value="LARGE RIBOSOMAL SUBUNIT PROTEIN UL30"/>
    <property type="match status" value="1"/>
</dbReference>
<dbReference type="Pfam" id="PF00327">
    <property type="entry name" value="Ribosomal_L30"/>
    <property type="match status" value="1"/>
</dbReference>
<dbReference type="SUPFAM" id="SSF55129">
    <property type="entry name" value="Ribosomal protein L30p/L7e"/>
    <property type="match status" value="1"/>
</dbReference>
<dbReference type="PROSITE" id="PS00634">
    <property type="entry name" value="RIBOSOMAL_L30"/>
    <property type="match status" value="1"/>
</dbReference>
<sequence>MFLVIRVRGTTGVIKNIADTLDMLRLNRISHAVLVEDTPSYNGMLQKAKDYITWGEIDADLLAEIIAKRGKFTGNNKVTDEYVAENSDYKNIDELAKAVIAGEVKLMDLDIKPVFRLHPPRKGYEDIRLSVKEGGSLGYRGENIKDLAERML</sequence>
<organism>
    <name type="scientific">Methanobrevibacter smithii (strain ATCC 35061 / DSM 861 / OCM 144 / PS)</name>
    <dbReference type="NCBI Taxonomy" id="420247"/>
    <lineage>
        <taxon>Archaea</taxon>
        <taxon>Methanobacteriati</taxon>
        <taxon>Methanobacteriota</taxon>
        <taxon>Methanomada group</taxon>
        <taxon>Methanobacteria</taxon>
        <taxon>Methanobacteriales</taxon>
        <taxon>Methanobacteriaceae</taxon>
        <taxon>Methanobrevibacter</taxon>
    </lineage>
</organism>
<accession>A5UL67</accession>
<reference key="1">
    <citation type="journal article" date="2007" name="Proc. Natl. Acad. Sci. U.S.A.">
        <title>Genomic and metabolic adaptations of Methanobrevibacter smithii to the human gut.</title>
        <authorList>
            <person name="Samuel B.S."/>
            <person name="Hansen E.E."/>
            <person name="Manchester J.K."/>
            <person name="Coutinho P.M."/>
            <person name="Henrissat B."/>
            <person name="Fulton R."/>
            <person name="Latreille P."/>
            <person name="Kim K."/>
            <person name="Wilson R.K."/>
            <person name="Gordon J.I."/>
        </authorList>
    </citation>
    <scope>NUCLEOTIDE SEQUENCE [LARGE SCALE GENOMIC DNA]</scope>
    <source>
        <strain>ATCC 35061 / DSM 861 / OCM 144 / PS</strain>
    </source>
</reference>
<comment type="subunit">
    <text evidence="1">Part of the 50S ribosomal subunit.</text>
</comment>
<comment type="similarity">
    <text evidence="1">Belongs to the universal ribosomal protein uL30 family.</text>
</comment>
<keyword id="KW-0687">Ribonucleoprotein</keyword>
<keyword id="KW-0689">Ribosomal protein</keyword>
<gene>
    <name evidence="1" type="primary">rpl30</name>
    <name type="ordered locus">Msm_0740</name>
</gene>
<name>RL30_METS3</name>
<evidence type="ECO:0000255" key="1">
    <source>
        <dbReference type="HAMAP-Rule" id="MF_01371"/>
    </source>
</evidence>
<evidence type="ECO:0000305" key="2"/>
<feature type="chain" id="PRO_0000347165" description="Large ribosomal subunit protein uL30">
    <location>
        <begin position="1"/>
        <end position="152"/>
    </location>
</feature>
<proteinExistence type="inferred from homology"/>